<dbReference type="EC" id="1.5.1.5" evidence="1"/>
<dbReference type="EC" id="3.5.4.9" evidence="1"/>
<dbReference type="EMBL" id="CP001103">
    <property type="protein sequence ID" value="AEA97208.1"/>
    <property type="molecule type" value="Genomic_DNA"/>
</dbReference>
<dbReference type="RefSeq" id="WP_012517562.1">
    <property type="nucleotide sequence ID" value="NC_011138.3"/>
</dbReference>
<dbReference type="SMR" id="B4RV70"/>
<dbReference type="GeneID" id="56343069"/>
<dbReference type="KEGG" id="amc:MADE_1005310"/>
<dbReference type="HOGENOM" id="CLU_034045_2_1_6"/>
<dbReference type="UniPathway" id="UPA00193"/>
<dbReference type="Proteomes" id="UP000001870">
    <property type="component" value="Chromosome"/>
</dbReference>
<dbReference type="GO" id="GO:0005829">
    <property type="term" value="C:cytosol"/>
    <property type="evidence" value="ECO:0007669"/>
    <property type="project" value="TreeGrafter"/>
</dbReference>
<dbReference type="GO" id="GO:0004477">
    <property type="term" value="F:methenyltetrahydrofolate cyclohydrolase activity"/>
    <property type="evidence" value="ECO:0007669"/>
    <property type="project" value="UniProtKB-UniRule"/>
</dbReference>
<dbReference type="GO" id="GO:0004488">
    <property type="term" value="F:methylenetetrahydrofolate dehydrogenase (NADP+) activity"/>
    <property type="evidence" value="ECO:0007669"/>
    <property type="project" value="UniProtKB-UniRule"/>
</dbReference>
<dbReference type="GO" id="GO:0000105">
    <property type="term" value="P:L-histidine biosynthetic process"/>
    <property type="evidence" value="ECO:0007669"/>
    <property type="project" value="UniProtKB-KW"/>
</dbReference>
<dbReference type="GO" id="GO:0009086">
    <property type="term" value="P:methionine biosynthetic process"/>
    <property type="evidence" value="ECO:0007669"/>
    <property type="project" value="UniProtKB-KW"/>
</dbReference>
<dbReference type="GO" id="GO:0006164">
    <property type="term" value="P:purine nucleotide biosynthetic process"/>
    <property type="evidence" value="ECO:0007669"/>
    <property type="project" value="UniProtKB-KW"/>
</dbReference>
<dbReference type="GO" id="GO:0035999">
    <property type="term" value="P:tetrahydrofolate interconversion"/>
    <property type="evidence" value="ECO:0007669"/>
    <property type="project" value="UniProtKB-UniRule"/>
</dbReference>
<dbReference type="CDD" id="cd01080">
    <property type="entry name" value="NAD_bind_m-THF_DH_Cyclohyd"/>
    <property type="match status" value="1"/>
</dbReference>
<dbReference type="FunFam" id="3.40.50.10860:FF:000001">
    <property type="entry name" value="Bifunctional protein FolD"/>
    <property type="match status" value="1"/>
</dbReference>
<dbReference type="FunFam" id="3.40.50.720:FF:000006">
    <property type="entry name" value="Bifunctional protein FolD"/>
    <property type="match status" value="1"/>
</dbReference>
<dbReference type="Gene3D" id="3.40.50.10860">
    <property type="entry name" value="Leucine Dehydrogenase, chain A, domain 1"/>
    <property type="match status" value="1"/>
</dbReference>
<dbReference type="Gene3D" id="3.40.50.720">
    <property type="entry name" value="NAD(P)-binding Rossmann-like Domain"/>
    <property type="match status" value="1"/>
</dbReference>
<dbReference type="HAMAP" id="MF_01576">
    <property type="entry name" value="THF_DHG_CYH"/>
    <property type="match status" value="1"/>
</dbReference>
<dbReference type="InterPro" id="IPR046346">
    <property type="entry name" value="Aminoacid_DH-like_N_sf"/>
</dbReference>
<dbReference type="InterPro" id="IPR036291">
    <property type="entry name" value="NAD(P)-bd_dom_sf"/>
</dbReference>
<dbReference type="InterPro" id="IPR000672">
    <property type="entry name" value="THF_DH/CycHdrlase"/>
</dbReference>
<dbReference type="InterPro" id="IPR020630">
    <property type="entry name" value="THF_DH/CycHdrlase_cat_dom"/>
</dbReference>
<dbReference type="InterPro" id="IPR020867">
    <property type="entry name" value="THF_DH/CycHdrlase_CS"/>
</dbReference>
<dbReference type="InterPro" id="IPR020631">
    <property type="entry name" value="THF_DH/CycHdrlase_NAD-bd_dom"/>
</dbReference>
<dbReference type="NCBIfam" id="NF008058">
    <property type="entry name" value="PRK10792.1"/>
    <property type="match status" value="1"/>
</dbReference>
<dbReference type="NCBIfam" id="NF010783">
    <property type="entry name" value="PRK14186.1"/>
    <property type="match status" value="1"/>
</dbReference>
<dbReference type="PANTHER" id="PTHR48099:SF5">
    <property type="entry name" value="C-1-TETRAHYDROFOLATE SYNTHASE, CYTOPLASMIC"/>
    <property type="match status" value="1"/>
</dbReference>
<dbReference type="PANTHER" id="PTHR48099">
    <property type="entry name" value="C-1-TETRAHYDROFOLATE SYNTHASE, CYTOPLASMIC-RELATED"/>
    <property type="match status" value="1"/>
</dbReference>
<dbReference type="Pfam" id="PF00763">
    <property type="entry name" value="THF_DHG_CYH"/>
    <property type="match status" value="1"/>
</dbReference>
<dbReference type="Pfam" id="PF02882">
    <property type="entry name" value="THF_DHG_CYH_C"/>
    <property type="match status" value="1"/>
</dbReference>
<dbReference type="PRINTS" id="PR00085">
    <property type="entry name" value="THFDHDRGNASE"/>
</dbReference>
<dbReference type="SUPFAM" id="SSF53223">
    <property type="entry name" value="Aminoacid dehydrogenase-like, N-terminal domain"/>
    <property type="match status" value="1"/>
</dbReference>
<dbReference type="SUPFAM" id="SSF51735">
    <property type="entry name" value="NAD(P)-binding Rossmann-fold domains"/>
    <property type="match status" value="1"/>
</dbReference>
<dbReference type="PROSITE" id="PS00767">
    <property type="entry name" value="THF_DHG_CYH_2"/>
    <property type="match status" value="1"/>
</dbReference>
<accession>B4RV70</accession>
<accession>F2G274</accession>
<gene>
    <name evidence="1" type="primary">folD</name>
    <name type="ordered locus">MADE_1005310</name>
</gene>
<keyword id="KW-0028">Amino-acid biosynthesis</keyword>
<keyword id="KW-0368">Histidine biosynthesis</keyword>
<keyword id="KW-0378">Hydrolase</keyword>
<keyword id="KW-0486">Methionine biosynthesis</keyword>
<keyword id="KW-0511">Multifunctional enzyme</keyword>
<keyword id="KW-0521">NADP</keyword>
<keyword id="KW-0554">One-carbon metabolism</keyword>
<keyword id="KW-0560">Oxidoreductase</keyword>
<keyword id="KW-0658">Purine biosynthesis</keyword>
<comment type="function">
    <text evidence="1">Catalyzes the oxidation of 5,10-methylenetetrahydrofolate to 5,10-methenyltetrahydrofolate and then the hydrolysis of 5,10-methenyltetrahydrofolate to 10-formyltetrahydrofolate.</text>
</comment>
<comment type="catalytic activity">
    <reaction evidence="1">
        <text>(6R)-5,10-methylene-5,6,7,8-tetrahydrofolate + NADP(+) = (6R)-5,10-methenyltetrahydrofolate + NADPH</text>
        <dbReference type="Rhea" id="RHEA:22812"/>
        <dbReference type="ChEBI" id="CHEBI:15636"/>
        <dbReference type="ChEBI" id="CHEBI:57455"/>
        <dbReference type="ChEBI" id="CHEBI:57783"/>
        <dbReference type="ChEBI" id="CHEBI:58349"/>
        <dbReference type="EC" id="1.5.1.5"/>
    </reaction>
</comment>
<comment type="catalytic activity">
    <reaction evidence="1">
        <text>(6R)-5,10-methenyltetrahydrofolate + H2O = (6R)-10-formyltetrahydrofolate + H(+)</text>
        <dbReference type="Rhea" id="RHEA:23700"/>
        <dbReference type="ChEBI" id="CHEBI:15377"/>
        <dbReference type="ChEBI" id="CHEBI:15378"/>
        <dbReference type="ChEBI" id="CHEBI:57455"/>
        <dbReference type="ChEBI" id="CHEBI:195366"/>
        <dbReference type="EC" id="3.5.4.9"/>
    </reaction>
</comment>
<comment type="pathway">
    <text evidence="1">One-carbon metabolism; tetrahydrofolate interconversion.</text>
</comment>
<comment type="subunit">
    <text evidence="1">Homodimer.</text>
</comment>
<comment type="similarity">
    <text evidence="1">Belongs to the tetrahydrofolate dehydrogenase/cyclohydrolase family.</text>
</comment>
<sequence length="284" mass="30666">MTAHLIDGKLIAKQVRQHVTSYVDSLTQAGKRQPGLAVVLVGSDAASQVYVSNKRKACDEVGFVSRSFDLPSDTTEETLLNLVDQLNEDKEIDGILVQLPLPAGLNAEKVLERIHPHKDVDGFHPYNIGRLAQRIPALRPCTPKGIMTMIESTKRPVKGLDAVIVGASNIVGRPMSLELLLAGCTVTTCHKFTQDLKSHVQRADLLVVAVGKPNFIPGDWVKPGAIVIDVGINRVNDGSLVGDVDFDKAKERAGWITPVPGGVGPMTVASLIENTLEAYVKYHS</sequence>
<evidence type="ECO:0000255" key="1">
    <source>
        <dbReference type="HAMAP-Rule" id="MF_01576"/>
    </source>
</evidence>
<protein>
    <recommendedName>
        <fullName evidence="1">Bifunctional protein FolD</fullName>
    </recommendedName>
    <domain>
        <recommendedName>
            <fullName evidence="1">Methylenetetrahydrofolate dehydrogenase</fullName>
            <ecNumber evidence="1">1.5.1.5</ecNumber>
        </recommendedName>
    </domain>
    <domain>
        <recommendedName>
            <fullName evidence="1">Methenyltetrahydrofolate cyclohydrolase</fullName>
            <ecNumber evidence="1">3.5.4.9</ecNumber>
        </recommendedName>
    </domain>
</protein>
<name>FOLD_ALTMD</name>
<reference key="1">
    <citation type="journal article" date="2008" name="ISME J.">
        <title>Comparative genomics of two ecotypes of the marine planktonic copiotroph Alteromonas macleodii suggests alternative lifestyles associated with different kinds of particulate organic matter.</title>
        <authorList>
            <person name="Ivars-Martinez E."/>
            <person name="Martin-Cuadrado A.-B."/>
            <person name="D'Auria G."/>
            <person name="Mira A."/>
            <person name="Ferriera S."/>
            <person name="Johnson J."/>
            <person name="Friedman R."/>
            <person name="Rodriguez-Valera F."/>
        </authorList>
    </citation>
    <scope>NUCLEOTIDE SEQUENCE [LARGE SCALE GENOMIC DNA]</scope>
    <source>
        <strain>DSM 17117 / CIP 110805 / LMG 28347 / Deep ecotype</strain>
    </source>
</reference>
<proteinExistence type="inferred from homology"/>
<organism>
    <name type="scientific">Alteromonas mediterranea (strain DSM 17117 / CIP 110805 / LMG 28347 / Deep ecotype)</name>
    <dbReference type="NCBI Taxonomy" id="1774373"/>
    <lineage>
        <taxon>Bacteria</taxon>
        <taxon>Pseudomonadati</taxon>
        <taxon>Pseudomonadota</taxon>
        <taxon>Gammaproteobacteria</taxon>
        <taxon>Alteromonadales</taxon>
        <taxon>Alteromonadaceae</taxon>
        <taxon>Alteromonas/Salinimonas group</taxon>
        <taxon>Alteromonas</taxon>
    </lineage>
</organism>
<feature type="chain" id="PRO_1000196749" description="Bifunctional protein FolD">
    <location>
        <begin position="1"/>
        <end position="284"/>
    </location>
</feature>
<feature type="binding site" evidence="1">
    <location>
        <begin position="166"/>
        <end position="168"/>
    </location>
    <ligand>
        <name>NADP(+)</name>
        <dbReference type="ChEBI" id="CHEBI:58349"/>
    </ligand>
</feature>
<feature type="binding site" evidence="1">
    <location>
        <position position="232"/>
    </location>
    <ligand>
        <name>NADP(+)</name>
        <dbReference type="ChEBI" id="CHEBI:58349"/>
    </ligand>
</feature>